<organism>
    <name type="scientific">Oryza sativa subsp. japonica</name>
    <name type="common">Rice</name>
    <dbReference type="NCBI Taxonomy" id="39947"/>
    <lineage>
        <taxon>Eukaryota</taxon>
        <taxon>Viridiplantae</taxon>
        <taxon>Streptophyta</taxon>
        <taxon>Embryophyta</taxon>
        <taxon>Tracheophyta</taxon>
        <taxon>Spermatophyta</taxon>
        <taxon>Magnoliopsida</taxon>
        <taxon>Liliopsida</taxon>
        <taxon>Poales</taxon>
        <taxon>Poaceae</taxon>
        <taxon>BOP clade</taxon>
        <taxon>Oryzoideae</taxon>
        <taxon>Oryzeae</taxon>
        <taxon>Oryzinae</taxon>
        <taxon>Oryza</taxon>
        <taxon>Oryza sativa</taxon>
    </lineage>
</organism>
<sequence length="448" mass="49587">MGQGTPGGMGKQGGAPGDRKPGGDGDKKDRKFEPPAAPSRVGRKQRKQKGPEAAARLPNVAPLSKCRLRLLKLERVKDYLLMEEEFVAAQERLRPTEDKTEEDRSKVDDLRGTPMSVGSLEEIIDESHAIVSSSVGPEYYVGILSFVDKDQLEPGCSILMHNKVLSVVGILQDEVDPMVSVMKVEKAPLESYADIGGLDAQIQEIKEAVELPLTHPELYEDIGIRPPKGVILYGEPGTGKTLLAKAVANSTSATFLRVVGSELIQKYLGDGPKLVRELFRVADELSPSIVFIDEIDAVGTKRYDAHSGGEREIQRTMLELLNQLDGFDSRGDVKVILATNRIESLDPALLRPGRIDRKIEFPLPDIKTRRRIFQIHTSKMTLADDVNLEEFVMTKDEFSGADIKAICTEAGLLALRERRMKVTHADFKKAKEKVMFKKKEGVPEGLYM</sequence>
<name>PRS4_ORYSJ</name>
<feature type="chain" id="PRO_0000084683" description="26S proteasome regulatory subunit 4 homolog">
    <location>
        <begin position="1"/>
        <end position="448"/>
    </location>
</feature>
<feature type="region of interest" description="Disordered" evidence="3">
    <location>
        <begin position="1"/>
        <end position="56"/>
    </location>
</feature>
<feature type="region of interest" description="Disordered" evidence="3">
    <location>
        <begin position="93"/>
        <end position="112"/>
    </location>
</feature>
<feature type="compositionally biased region" description="Gly residues" evidence="3">
    <location>
        <begin position="1"/>
        <end position="16"/>
    </location>
</feature>
<feature type="compositionally biased region" description="Basic and acidic residues" evidence="3">
    <location>
        <begin position="17"/>
        <end position="33"/>
    </location>
</feature>
<feature type="compositionally biased region" description="Basic and acidic residues" evidence="3">
    <location>
        <begin position="93"/>
        <end position="111"/>
    </location>
</feature>
<feature type="binding site" evidence="2">
    <location>
        <begin position="234"/>
        <end position="241"/>
    </location>
    <ligand>
        <name>ATP</name>
        <dbReference type="ChEBI" id="CHEBI:30616"/>
    </ligand>
</feature>
<feature type="sequence conflict" description="In Ref. 1; BAA04615." evidence="4" ref="1">
    <original>P</original>
    <variation>S</variation>
    <location>
        <position position="35"/>
    </location>
</feature>
<comment type="function">
    <text evidence="1">The 26S proteasome is involved in the ATP-dependent degradation of ubiquitinated proteins. The regulatory (or ATPase) complex confers ATP dependency and substrate specificity to the 26S complex (By similarity).</text>
</comment>
<comment type="subcellular location">
    <subcellularLocation>
        <location evidence="4">Cytoplasm</location>
    </subcellularLocation>
    <subcellularLocation>
        <location evidence="4">Nucleus</location>
    </subcellularLocation>
</comment>
<comment type="similarity">
    <text evidence="4">Belongs to the AAA ATPase family.</text>
</comment>
<reference key="1">
    <citation type="journal article" date="1994" name="Plant Sci.">
        <title>Identification of cDNA clones for rice homologs of the human immunodeficiency virus-1 Tat binding protein and subunit 4 of human 26S protease (proteasome).</title>
        <authorList>
            <person name="Suzuka I."/>
            <person name="Koga-Ban Y."/>
            <person name="Sasaki T."/>
            <person name="Minobe Y."/>
            <person name="Hashimoto J."/>
        </authorList>
    </citation>
    <scope>NUCLEOTIDE SEQUENCE [MRNA]</scope>
    <source>
        <strain>cv. Nipponbare</strain>
        <tissue>Callus</tissue>
    </source>
</reference>
<reference key="2">
    <citation type="journal article" date="2005" name="Nature">
        <title>The map-based sequence of the rice genome.</title>
        <authorList>
            <consortium name="International rice genome sequencing project (IRGSP)"/>
        </authorList>
    </citation>
    <scope>NUCLEOTIDE SEQUENCE [LARGE SCALE GENOMIC DNA]</scope>
    <source>
        <strain>cv. Nipponbare</strain>
    </source>
</reference>
<reference key="3">
    <citation type="journal article" date="2008" name="Nucleic Acids Res.">
        <title>The rice annotation project database (RAP-DB): 2008 update.</title>
        <authorList>
            <consortium name="The rice annotation project (RAP)"/>
        </authorList>
    </citation>
    <scope>GENOME REANNOTATION</scope>
    <source>
        <strain>cv. Nipponbare</strain>
    </source>
</reference>
<reference key="4">
    <citation type="journal article" date="2013" name="Rice">
        <title>Improvement of the Oryza sativa Nipponbare reference genome using next generation sequence and optical map data.</title>
        <authorList>
            <person name="Kawahara Y."/>
            <person name="de la Bastide M."/>
            <person name="Hamilton J.P."/>
            <person name="Kanamori H."/>
            <person name="McCombie W.R."/>
            <person name="Ouyang S."/>
            <person name="Schwartz D.C."/>
            <person name="Tanaka T."/>
            <person name="Wu J."/>
            <person name="Zhou S."/>
            <person name="Childs K.L."/>
            <person name="Davidson R.M."/>
            <person name="Lin H."/>
            <person name="Quesada-Ocampo L."/>
            <person name="Vaillancourt B."/>
            <person name="Sakai H."/>
            <person name="Lee S.S."/>
            <person name="Kim J."/>
            <person name="Numa H."/>
            <person name="Itoh T."/>
            <person name="Buell C.R."/>
            <person name="Matsumoto T."/>
        </authorList>
    </citation>
    <scope>GENOME REANNOTATION</scope>
    <source>
        <strain>cv. Nipponbare</strain>
    </source>
</reference>
<reference key="5">
    <citation type="journal article" date="2003" name="Science">
        <title>Collection, mapping, and annotation of over 28,000 cDNA clones from japonica rice.</title>
        <authorList>
            <consortium name="The rice full-length cDNA consortium"/>
        </authorList>
    </citation>
    <scope>NUCLEOTIDE SEQUENCE [LARGE SCALE MRNA]</scope>
    <source>
        <strain>cv. Nipponbare</strain>
    </source>
</reference>
<evidence type="ECO:0000250" key="1"/>
<evidence type="ECO:0000255" key="2"/>
<evidence type="ECO:0000256" key="3">
    <source>
        <dbReference type="SAM" id="MobiDB-lite"/>
    </source>
</evidence>
<evidence type="ECO:0000305" key="4"/>
<proteinExistence type="evidence at transcript level"/>
<protein>
    <recommendedName>
        <fullName>26S proteasome regulatory subunit 4 homolog</fullName>
    </recommendedName>
    <alternativeName>
        <fullName>Tat-binding protein homolog 2</fullName>
    </alternativeName>
</protein>
<gene>
    <name type="primary">TBP2</name>
    <name type="ordered locus">Os07g0691800</name>
    <name type="ordered locus">LOC_Os07g49150</name>
    <name type="ORF">P0034A04.112</name>
</gene>
<keyword id="KW-0067">ATP-binding</keyword>
<keyword id="KW-0963">Cytoplasm</keyword>
<keyword id="KW-0547">Nucleotide-binding</keyword>
<keyword id="KW-0539">Nucleus</keyword>
<keyword id="KW-0647">Proteasome</keyword>
<keyword id="KW-1185">Reference proteome</keyword>
<dbReference type="EMBL" id="D17789">
    <property type="protein sequence ID" value="BAA04615.1"/>
    <property type="molecule type" value="mRNA"/>
</dbReference>
<dbReference type="EMBL" id="AP004333">
    <property type="protein sequence ID" value="BAC75555.1"/>
    <property type="molecule type" value="Genomic_DNA"/>
</dbReference>
<dbReference type="EMBL" id="AP008213">
    <property type="protein sequence ID" value="BAF22633.1"/>
    <property type="molecule type" value="Genomic_DNA"/>
</dbReference>
<dbReference type="EMBL" id="AP014963">
    <property type="protein sequence ID" value="BAT03341.1"/>
    <property type="molecule type" value="Genomic_DNA"/>
</dbReference>
<dbReference type="EMBL" id="AK058311">
    <property type="protein sequence ID" value="BAG86657.1"/>
    <property type="molecule type" value="mRNA"/>
</dbReference>
<dbReference type="EMBL" id="AK099264">
    <property type="protein sequence ID" value="BAG94028.1"/>
    <property type="molecule type" value="mRNA"/>
</dbReference>
<dbReference type="EMBL" id="AK105861">
    <property type="protein sequence ID" value="BAG97398.1"/>
    <property type="molecule type" value="mRNA"/>
</dbReference>
<dbReference type="PIR" id="T03776">
    <property type="entry name" value="T03776"/>
</dbReference>
<dbReference type="RefSeq" id="XP_015647425.1">
    <property type="nucleotide sequence ID" value="XM_015791939.1"/>
</dbReference>
<dbReference type="SMR" id="P46466"/>
<dbReference type="BioGRID" id="813410">
    <property type="interactions" value="1"/>
</dbReference>
<dbReference type="FunCoup" id="P46466">
    <property type="interactions" value="2337"/>
</dbReference>
<dbReference type="STRING" id="39947.P46466"/>
<dbReference type="PaxDb" id="39947-P46466"/>
<dbReference type="EnsemblPlants" id="Os07t0691800-01">
    <property type="protein sequence ID" value="Os07t0691800-01"/>
    <property type="gene ID" value="Os07g0691800"/>
</dbReference>
<dbReference type="Gramene" id="Os07t0691800-01">
    <property type="protein sequence ID" value="Os07t0691800-01"/>
    <property type="gene ID" value="Os07g0691800"/>
</dbReference>
<dbReference type="KEGG" id="dosa:Os07g0691800"/>
<dbReference type="eggNOG" id="KOG0726">
    <property type="taxonomic scope" value="Eukaryota"/>
</dbReference>
<dbReference type="HOGENOM" id="CLU_000688_2_3_1"/>
<dbReference type="InParanoid" id="P46466"/>
<dbReference type="OMA" id="ACPCAND"/>
<dbReference type="OrthoDB" id="2013077at2759"/>
<dbReference type="Proteomes" id="UP000000763">
    <property type="component" value="Chromosome 7"/>
</dbReference>
<dbReference type="Proteomes" id="UP000059680">
    <property type="component" value="Chromosome 7"/>
</dbReference>
<dbReference type="ExpressionAtlas" id="P46466">
    <property type="expression patterns" value="baseline and differential"/>
</dbReference>
<dbReference type="GO" id="GO:0005737">
    <property type="term" value="C:cytoplasm"/>
    <property type="evidence" value="ECO:0007669"/>
    <property type="project" value="UniProtKB-SubCell"/>
</dbReference>
<dbReference type="GO" id="GO:0005634">
    <property type="term" value="C:nucleus"/>
    <property type="evidence" value="ECO:0007669"/>
    <property type="project" value="UniProtKB-SubCell"/>
</dbReference>
<dbReference type="GO" id="GO:0008540">
    <property type="term" value="C:proteasome regulatory particle, base subcomplex"/>
    <property type="evidence" value="ECO:0000318"/>
    <property type="project" value="GO_Central"/>
</dbReference>
<dbReference type="GO" id="GO:0005524">
    <property type="term" value="F:ATP binding"/>
    <property type="evidence" value="ECO:0007669"/>
    <property type="project" value="UniProtKB-KW"/>
</dbReference>
<dbReference type="GO" id="GO:0016887">
    <property type="term" value="F:ATP hydrolysis activity"/>
    <property type="evidence" value="ECO:0007669"/>
    <property type="project" value="InterPro"/>
</dbReference>
<dbReference type="GO" id="GO:0036402">
    <property type="term" value="F:proteasome-activating activity"/>
    <property type="evidence" value="ECO:0000318"/>
    <property type="project" value="GO_Central"/>
</dbReference>
<dbReference type="GO" id="GO:0043161">
    <property type="term" value="P:proteasome-mediated ubiquitin-dependent protein catabolic process"/>
    <property type="evidence" value="ECO:0000318"/>
    <property type="project" value="GO_Central"/>
</dbReference>
<dbReference type="FunFam" id="2.40.50.140:FF:000067">
    <property type="entry name" value="26S protease regulatory subunit 4"/>
    <property type="match status" value="1"/>
</dbReference>
<dbReference type="FunFam" id="1.10.8.60:FF:000007">
    <property type="entry name" value="26S proteasome regulatory subunit 4"/>
    <property type="match status" value="1"/>
</dbReference>
<dbReference type="FunFam" id="3.40.50.300:FF:000039">
    <property type="entry name" value="26S proteasome regulatory subunit 4"/>
    <property type="match status" value="1"/>
</dbReference>
<dbReference type="Gene3D" id="1.10.8.60">
    <property type="match status" value="1"/>
</dbReference>
<dbReference type="Gene3D" id="2.40.50.140">
    <property type="entry name" value="Nucleic acid-binding proteins"/>
    <property type="match status" value="1"/>
</dbReference>
<dbReference type="Gene3D" id="3.40.50.300">
    <property type="entry name" value="P-loop containing nucleotide triphosphate hydrolases"/>
    <property type="match status" value="1"/>
</dbReference>
<dbReference type="InterPro" id="IPR050221">
    <property type="entry name" value="26S_Proteasome_ATPase"/>
</dbReference>
<dbReference type="InterPro" id="IPR003593">
    <property type="entry name" value="AAA+_ATPase"/>
</dbReference>
<dbReference type="InterPro" id="IPR041569">
    <property type="entry name" value="AAA_lid_3"/>
</dbReference>
<dbReference type="InterPro" id="IPR003959">
    <property type="entry name" value="ATPase_AAA_core"/>
</dbReference>
<dbReference type="InterPro" id="IPR003960">
    <property type="entry name" value="ATPase_AAA_CS"/>
</dbReference>
<dbReference type="InterPro" id="IPR012340">
    <property type="entry name" value="NA-bd_OB-fold"/>
</dbReference>
<dbReference type="InterPro" id="IPR027417">
    <property type="entry name" value="P-loop_NTPase"/>
</dbReference>
<dbReference type="InterPro" id="IPR032501">
    <property type="entry name" value="Prot_ATP_ID_OB_2nd"/>
</dbReference>
<dbReference type="PANTHER" id="PTHR23073">
    <property type="entry name" value="26S PROTEASOME REGULATORY SUBUNIT"/>
    <property type="match status" value="1"/>
</dbReference>
<dbReference type="Pfam" id="PF00004">
    <property type="entry name" value="AAA"/>
    <property type="match status" value="1"/>
</dbReference>
<dbReference type="Pfam" id="PF17862">
    <property type="entry name" value="AAA_lid_3"/>
    <property type="match status" value="1"/>
</dbReference>
<dbReference type="Pfam" id="PF16450">
    <property type="entry name" value="Prot_ATP_ID_OB_C"/>
    <property type="match status" value="1"/>
</dbReference>
<dbReference type="SMART" id="SM00382">
    <property type="entry name" value="AAA"/>
    <property type="match status" value="1"/>
</dbReference>
<dbReference type="SUPFAM" id="SSF52540">
    <property type="entry name" value="P-loop containing nucleoside triphosphate hydrolases"/>
    <property type="match status" value="1"/>
</dbReference>
<dbReference type="PROSITE" id="PS00674">
    <property type="entry name" value="AAA"/>
    <property type="match status" value="1"/>
</dbReference>
<accession>P46466</accession>
<accession>Q0D3E0</accession>
<accession>Q84NR0</accession>